<dbReference type="EMBL" id="AF401572">
    <property type="protein sequence ID" value="AAK95144.1"/>
    <property type="molecule type" value="mRNA"/>
</dbReference>
<dbReference type="RefSeq" id="NP_001187045.1">
    <property type="nucleotide sequence ID" value="NM_001200116.1"/>
</dbReference>
<dbReference type="SMR" id="Q90YV0"/>
<dbReference type="STRING" id="7998.ENSIPUP00000011535"/>
<dbReference type="Ensembl" id="ENSIPUT00015099104">
    <property type="protein sequence ID" value="ENSIPUP00015083319"/>
    <property type="gene ID" value="ENSIPUG00015038201"/>
</dbReference>
<dbReference type="GeneID" id="100304533"/>
<dbReference type="KEGG" id="ipu:100304533"/>
<dbReference type="CTD" id="6141"/>
<dbReference type="OrthoDB" id="6353017at2759"/>
<dbReference type="Proteomes" id="UP000221080">
    <property type="component" value="Chromosome 1"/>
</dbReference>
<dbReference type="GO" id="GO:0022625">
    <property type="term" value="C:cytosolic large ribosomal subunit"/>
    <property type="evidence" value="ECO:0000250"/>
    <property type="project" value="UniProtKB"/>
</dbReference>
<dbReference type="GO" id="GO:0005791">
    <property type="term" value="C:rough endoplasmic reticulum"/>
    <property type="evidence" value="ECO:0007669"/>
    <property type="project" value="UniProtKB-SubCell"/>
</dbReference>
<dbReference type="GO" id="GO:0003723">
    <property type="term" value="F:RNA binding"/>
    <property type="evidence" value="ECO:0007669"/>
    <property type="project" value="TreeGrafter"/>
</dbReference>
<dbReference type="GO" id="GO:0003735">
    <property type="term" value="F:structural constituent of ribosome"/>
    <property type="evidence" value="ECO:0007669"/>
    <property type="project" value="InterPro"/>
</dbReference>
<dbReference type="GO" id="GO:0002181">
    <property type="term" value="P:cytoplasmic translation"/>
    <property type="evidence" value="ECO:0000250"/>
    <property type="project" value="UniProtKB"/>
</dbReference>
<dbReference type="FunFam" id="3.100.10.10:FF:000001">
    <property type="entry name" value="60S ribosomal protein L18"/>
    <property type="match status" value="1"/>
</dbReference>
<dbReference type="Gene3D" id="3.100.10.10">
    <property type="match status" value="1"/>
</dbReference>
<dbReference type="InterPro" id="IPR000039">
    <property type="entry name" value="Ribosomal_eL18"/>
</dbReference>
<dbReference type="InterPro" id="IPR021132">
    <property type="entry name" value="Ribosomal_eL18/eL18-A/B/_CS"/>
</dbReference>
<dbReference type="InterPro" id="IPR021131">
    <property type="entry name" value="Ribosomal_uL15/eL18"/>
</dbReference>
<dbReference type="InterPro" id="IPR036227">
    <property type="entry name" value="Ribosomal_uL15/eL18_sf"/>
</dbReference>
<dbReference type="PANTHER" id="PTHR10934">
    <property type="entry name" value="60S RIBOSOMAL PROTEIN L18"/>
    <property type="match status" value="1"/>
</dbReference>
<dbReference type="PANTHER" id="PTHR10934:SF2">
    <property type="entry name" value="LARGE RIBOSOMAL SUBUNIT PROTEIN EL18"/>
    <property type="match status" value="1"/>
</dbReference>
<dbReference type="Pfam" id="PF17135">
    <property type="entry name" value="Ribosomal_L18"/>
    <property type="match status" value="1"/>
</dbReference>
<dbReference type="SUPFAM" id="SSF52080">
    <property type="entry name" value="Ribosomal proteins L15p and L18e"/>
    <property type="match status" value="1"/>
</dbReference>
<dbReference type="PROSITE" id="PS01106">
    <property type="entry name" value="RIBOSOMAL_L18E"/>
    <property type="match status" value="1"/>
</dbReference>
<reference key="1">
    <citation type="journal article" date="2003" name="Gene">
        <title>Translational machinery of channel catfish: II. Complementary DNA and expression of the complete set of 47 60S ribosomal proteins.</title>
        <authorList>
            <person name="Patterson A.P."/>
            <person name="Karsi A."/>
            <person name="Feng J."/>
            <person name="Liu Z.J."/>
        </authorList>
    </citation>
    <scope>NUCLEOTIDE SEQUENCE [MRNA]</scope>
</reference>
<proteinExistence type="evidence at transcript level"/>
<sequence>MGVDIRHNKDRKVHRTEPKSQDIYLRLLVKLYRFLARRSDAPFNKVVLKRLFMSKTNRPPLALSRLIRKMKLQGRENKIAVVVGTITDDVRILNIPKLKVCALRVTAGARRRILKAGGQVMTFDQLAVTTPKGQGTVLLSGPRKAREVYRHFGKAPGTPHSHTKPYIRSKGRKFERARGRRASRGYKN</sequence>
<name>RL18_ICTPU</name>
<organism>
    <name type="scientific">Ictalurus punctatus</name>
    <name type="common">Channel catfish</name>
    <name type="synonym">Silurus punctatus</name>
    <dbReference type="NCBI Taxonomy" id="7998"/>
    <lineage>
        <taxon>Eukaryota</taxon>
        <taxon>Metazoa</taxon>
        <taxon>Chordata</taxon>
        <taxon>Craniata</taxon>
        <taxon>Vertebrata</taxon>
        <taxon>Euteleostomi</taxon>
        <taxon>Actinopterygii</taxon>
        <taxon>Neopterygii</taxon>
        <taxon>Teleostei</taxon>
        <taxon>Ostariophysi</taxon>
        <taxon>Siluriformes</taxon>
        <taxon>Ictaluridae</taxon>
        <taxon>Ictalurus</taxon>
    </lineage>
</organism>
<evidence type="ECO:0000250" key="1">
    <source>
        <dbReference type="UniProtKB" id="Q07020"/>
    </source>
</evidence>
<evidence type="ECO:0000250" key="2">
    <source>
        <dbReference type="UniProtKB" id="Q95342"/>
    </source>
</evidence>
<evidence type="ECO:0000256" key="3">
    <source>
        <dbReference type="SAM" id="MobiDB-lite"/>
    </source>
</evidence>
<evidence type="ECO:0000305" key="4"/>
<protein>
    <recommendedName>
        <fullName evidence="4">Large ribosomal subunit protein eL18</fullName>
    </recommendedName>
    <alternativeName>
        <fullName>60S ribosomal protein L18</fullName>
    </alternativeName>
</protein>
<feature type="chain" id="PRO_0000132775" description="Large ribosomal subunit protein eL18">
    <location>
        <begin position="1"/>
        <end position="188"/>
    </location>
</feature>
<feature type="region of interest" description="Disordered" evidence="3">
    <location>
        <begin position="153"/>
        <end position="188"/>
    </location>
</feature>
<feature type="compositionally biased region" description="Basic residues" evidence="3">
    <location>
        <begin position="161"/>
        <end position="171"/>
    </location>
</feature>
<feature type="compositionally biased region" description="Basic residues" evidence="3">
    <location>
        <begin position="178"/>
        <end position="188"/>
    </location>
</feature>
<accession>Q90YV0</accession>
<keyword id="KW-0963">Cytoplasm</keyword>
<keyword id="KW-0256">Endoplasmic reticulum</keyword>
<keyword id="KW-0687">Ribonucleoprotein</keyword>
<keyword id="KW-0689">Ribosomal protein</keyword>
<comment type="function">
    <text evidence="1">Component of the large ribosomal subunit. The ribosome is a large ribonucleoprotein complex responsible for the synthesis of proteins in the cell.</text>
</comment>
<comment type="subunit">
    <text evidence="1">Component of the large ribosomal subunit.</text>
</comment>
<comment type="subcellular location">
    <subcellularLocation>
        <location evidence="1">Cytoplasm</location>
        <location evidence="1">Cytosol</location>
    </subcellularLocation>
    <subcellularLocation>
        <location evidence="1">Cytoplasm</location>
    </subcellularLocation>
    <subcellularLocation>
        <location evidence="2">Rough endoplasmic reticulum</location>
    </subcellularLocation>
    <text evidence="1 2">Detected on cytosolic polysomes (By similarity). Detected in ribosomes that are associated with the rough endoplasmic reticulum (By similarity).</text>
</comment>
<comment type="similarity">
    <text evidence="4">Belongs to the eukaryotic ribosomal protein eL18 family.</text>
</comment>
<gene>
    <name type="primary">rpl18</name>
</gene>